<evidence type="ECO:0000255" key="1">
    <source>
        <dbReference type="HAMAP-Rule" id="MF_01825"/>
    </source>
</evidence>
<comment type="function">
    <text evidence="1">Catalyzes the oxidation of erythronate-4-phosphate to 3-hydroxy-2-oxo-4-phosphonooxybutanoate.</text>
</comment>
<comment type="catalytic activity">
    <reaction evidence="1">
        <text>4-phospho-D-erythronate + NAD(+) = (R)-3-hydroxy-2-oxo-4-phosphooxybutanoate + NADH + H(+)</text>
        <dbReference type="Rhea" id="RHEA:18829"/>
        <dbReference type="ChEBI" id="CHEBI:15378"/>
        <dbReference type="ChEBI" id="CHEBI:57540"/>
        <dbReference type="ChEBI" id="CHEBI:57945"/>
        <dbReference type="ChEBI" id="CHEBI:58538"/>
        <dbReference type="ChEBI" id="CHEBI:58766"/>
        <dbReference type="EC" id="1.1.1.290"/>
    </reaction>
</comment>
<comment type="pathway">
    <text evidence="1">Cofactor biosynthesis; pyridoxine 5'-phosphate biosynthesis; pyridoxine 5'-phosphate from D-erythrose 4-phosphate: step 2/5.</text>
</comment>
<comment type="subunit">
    <text evidence="1">Homodimer.</text>
</comment>
<comment type="subcellular location">
    <subcellularLocation>
        <location evidence="1">Cytoplasm</location>
    </subcellularLocation>
</comment>
<comment type="similarity">
    <text evidence="1">Belongs to the D-isomer specific 2-hydroxyacid dehydrogenase family. PdxB subfamily.</text>
</comment>
<dbReference type="EC" id="1.1.1.290" evidence="1"/>
<dbReference type="EMBL" id="CR543861">
    <property type="protein sequence ID" value="CAG69422.1"/>
    <property type="molecule type" value="Genomic_DNA"/>
</dbReference>
<dbReference type="RefSeq" id="WP_004928940.1">
    <property type="nucleotide sequence ID" value="NC_005966.1"/>
</dbReference>
<dbReference type="SMR" id="Q6F943"/>
<dbReference type="STRING" id="202950.GCA_001485005_02313"/>
<dbReference type="GeneID" id="45234942"/>
<dbReference type="KEGG" id="aci:ACIAD2667"/>
<dbReference type="eggNOG" id="COG0111">
    <property type="taxonomic scope" value="Bacteria"/>
</dbReference>
<dbReference type="HOGENOM" id="CLU_019796_4_0_6"/>
<dbReference type="OrthoDB" id="9770208at2"/>
<dbReference type="BioCyc" id="ASP62977:ACIAD_RS12125-MONOMER"/>
<dbReference type="UniPathway" id="UPA00244">
    <property type="reaction ID" value="UER00310"/>
</dbReference>
<dbReference type="Proteomes" id="UP000000430">
    <property type="component" value="Chromosome"/>
</dbReference>
<dbReference type="GO" id="GO:0005829">
    <property type="term" value="C:cytosol"/>
    <property type="evidence" value="ECO:0007669"/>
    <property type="project" value="TreeGrafter"/>
</dbReference>
<dbReference type="GO" id="GO:0033711">
    <property type="term" value="F:4-phosphoerythronate dehydrogenase activity"/>
    <property type="evidence" value="ECO:0007669"/>
    <property type="project" value="UniProtKB-EC"/>
</dbReference>
<dbReference type="GO" id="GO:0051287">
    <property type="term" value="F:NAD binding"/>
    <property type="evidence" value="ECO:0007669"/>
    <property type="project" value="InterPro"/>
</dbReference>
<dbReference type="GO" id="GO:0046983">
    <property type="term" value="F:protein dimerization activity"/>
    <property type="evidence" value="ECO:0007669"/>
    <property type="project" value="InterPro"/>
</dbReference>
<dbReference type="GO" id="GO:0036001">
    <property type="term" value="P:'de novo' pyridoxal 5'-phosphate biosynthetic process"/>
    <property type="evidence" value="ECO:0007669"/>
    <property type="project" value="TreeGrafter"/>
</dbReference>
<dbReference type="GO" id="GO:0008615">
    <property type="term" value="P:pyridoxine biosynthetic process"/>
    <property type="evidence" value="ECO:0007669"/>
    <property type="project" value="UniProtKB-UniRule"/>
</dbReference>
<dbReference type="CDD" id="cd12158">
    <property type="entry name" value="ErythrP_dh"/>
    <property type="match status" value="1"/>
</dbReference>
<dbReference type="Gene3D" id="3.30.1370.170">
    <property type="match status" value="1"/>
</dbReference>
<dbReference type="Gene3D" id="3.40.50.720">
    <property type="entry name" value="NAD(P)-binding Rossmann-like Domain"/>
    <property type="match status" value="2"/>
</dbReference>
<dbReference type="HAMAP" id="MF_01825">
    <property type="entry name" value="PdxB"/>
    <property type="match status" value="1"/>
</dbReference>
<dbReference type="InterPro" id="IPR006139">
    <property type="entry name" value="D-isomer_2_OHA_DH_cat_dom"/>
</dbReference>
<dbReference type="InterPro" id="IPR029753">
    <property type="entry name" value="D-isomer_DH_CS"/>
</dbReference>
<dbReference type="InterPro" id="IPR029752">
    <property type="entry name" value="D-isomer_DH_CS1"/>
</dbReference>
<dbReference type="InterPro" id="IPR006140">
    <property type="entry name" value="D-isomer_DH_NAD-bd"/>
</dbReference>
<dbReference type="InterPro" id="IPR020921">
    <property type="entry name" value="Erythronate-4-P_DHase"/>
</dbReference>
<dbReference type="InterPro" id="IPR024531">
    <property type="entry name" value="Erythronate-4-P_DHase_dimer"/>
</dbReference>
<dbReference type="InterPro" id="IPR036291">
    <property type="entry name" value="NAD(P)-bd_dom_sf"/>
</dbReference>
<dbReference type="InterPro" id="IPR038251">
    <property type="entry name" value="PdxB_dimer_sf"/>
</dbReference>
<dbReference type="PANTHER" id="PTHR42938">
    <property type="entry name" value="FORMATE DEHYDROGENASE 1"/>
    <property type="match status" value="1"/>
</dbReference>
<dbReference type="PANTHER" id="PTHR42938:SF9">
    <property type="entry name" value="FORMATE DEHYDROGENASE 1"/>
    <property type="match status" value="1"/>
</dbReference>
<dbReference type="Pfam" id="PF00389">
    <property type="entry name" value="2-Hacid_dh"/>
    <property type="match status" value="1"/>
</dbReference>
<dbReference type="Pfam" id="PF02826">
    <property type="entry name" value="2-Hacid_dh_C"/>
    <property type="match status" value="1"/>
</dbReference>
<dbReference type="Pfam" id="PF11890">
    <property type="entry name" value="DUF3410"/>
    <property type="match status" value="1"/>
</dbReference>
<dbReference type="SUPFAM" id="SSF52283">
    <property type="entry name" value="Formate/glycerate dehydrogenase catalytic domain-like"/>
    <property type="match status" value="1"/>
</dbReference>
<dbReference type="SUPFAM" id="SSF51735">
    <property type="entry name" value="NAD(P)-binding Rossmann-fold domains"/>
    <property type="match status" value="1"/>
</dbReference>
<dbReference type="PROSITE" id="PS00065">
    <property type="entry name" value="D_2_HYDROXYACID_DH_1"/>
    <property type="match status" value="1"/>
</dbReference>
<dbReference type="PROSITE" id="PS00671">
    <property type="entry name" value="D_2_HYDROXYACID_DH_3"/>
    <property type="match status" value="1"/>
</dbReference>
<feature type="chain" id="PRO_0000297429" description="Erythronate-4-phosphate dehydrogenase">
    <location>
        <begin position="1"/>
        <end position="355"/>
    </location>
</feature>
<feature type="active site" evidence="1">
    <location>
        <position position="206"/>
    </location>
</feature>
<feature type="active site" evidence="1">
    <location>
        <position position="234"/>
    </location>
</feature>
<feature type="active site" description="Proton donor" evidence="1">
    <location>
        <position position="251"/>
    </location>
</feature>
<feature type="binding site" evidence="1">
    <location>
        <position position="45"/>
    </location>
    <ligand>
        <name>substrate</name>
    </ligand>
</feature>
<feature type="binding site" evidence="1">
    <location>
        <position position="66"/>
    </location>
    <ligand>
        <name>substrate</name>
    </ligand>
</feature>
<feature type="binding site" evidence="1">
    <location>
        <position position="146"/>
    </location>
    <ligand>
        <name>NAD(+)</name>
        <dbReference type="ChEBI" id="CHEBI:57540"/>
    </ligand>
</feature>
<feature type="binding site" evidence="1">
    <location>
        <position position="229"/>
    </location>
    <ligand>
        <name>NAD(+)</name>
        <dbReference type="ChEBI" id="CHEBI:57540"/>
    </ligand>
</feature>
<feature type="binding site" evidence="1">
    <location>
        <position position="254"/>
    </location>
    <ligand>
        <name>NAD(+)</name>
        <dbReference type="ChEBI" id="CHEBI:57540"/>
    </ligand>
</feature>
<feature type="binding site" evidence="1">
    <location>
        <position position="255"/>
    </location>
    <ligand>
        <name>substrate</name>
    </ligand>
</feature>
<keyword id="KW-0963">Cytoplasm</keyword>
<keyword id="KW-0520">NAD</keyword>
<keyword id="KW-0560">Oxidoreductase</keyword>
<keyword id="KW-0664">Pyridoxine biosynthesis</keyword>
<protein>
    <recommendedName>
        <fullName evidence="1">Erythronate-4-phosphate dehydrogenase</fullName>
        <ecNumber evidence="1">1.1.1.290</ecNumber>
    </recommendedName>
</protein>
<proteinExistence type="inferred from homology"/>
<name>PDXB_ACIAD</name>
<reference key="1">
    <citation type="journal article" date="2004" name="Nucleic Acids Res.">
        <title>Unique features revealed by the genome sequence of Acinetobacter sp. ADP1, a versatile and naturally transformation competent bacterium.</title>
        <authorList>
            <person name="Barbe V."/>
            <person name="Vallenet D."/>
            <person name="Fonknechten N."/>
            <person name="Kreimeyer A."/>
            <person name="Oztas S."/>
            <person name="Labarre L."/>
            <person name="Cruveiller S."/>
            <person name="Robert C."/>
            <person name="Duprat S."/>
            <person name="Wincker P."/>
            <person name="Ornston L.N."/>
            <person name="Weissenbach J."/>
            <person name="Marliere P."/>
            <person name="Cohen G.N."/>
            <person name="Medigue C."/>
        </authorList>
    </citation>
    <scope>NUCLEOTIDE SEQUENCE [LARGE SCALE GENOMIC DNA]</scope>
    <source>
        <strain>ATCC 33305 / BD413 / ADP1</strain>
    </source>
</reference>
<accession>Q6F943</accession>
<sequence length="355" mass="39464">MKIVADENLAFTDYFFSEFGEIQHRAGRLLTAHDVSDAEALLVRSVTKVNQALIEHSQLKFVGSATIGTDHLDISALQQQDILWSNAPGCNAQAVAEYVITALYHLDSDVFERGQDFTLGIIGLGNVGRRLAKMAALLGWNVIGCDPFVQLPDIHNLSFDDVLQKSDAISVHVPLTHSGSHPTFHLFDQHAFASMPASTILINSARGPVIEEQALIQDIYQTGRKVVLDVFEHEPVISEQLLDVVNLVTPHIAGYSLEGKARGTQMIYDAFCKVFGYEASKKFETQLPVCEPFFQQQDLKQILKAHLRAIYDIAQDDHNLRACVKDGQVDQCAFDQLRKEYPLRREWAAHGGPVA</sequence>
<gene>
    <name evidence="1" type="primary">pdxB</name>
    <name type="ordered locus">ACIAD2667</name>
</gene>
<organism>
    <name type="scientific">Acinetobacter baylyi (strain ATCC 33305 / BD413 / ADP1)</name>
    <dbReference type="NCBI Taxonomy" id="62977"/>
    <lineage>
        <taxon>Bacteria</taxon>
        <taxon>Pseudomonadati</taxon>
        <taxon>Pseudomonadota</taxon>
        <taxon>Gammaproteobacteria</taxon>
        <taxon>Moraxellales</taxon>
        <taxon>Moraxellaceae</taxon>
        <taxon>Acinetobacter</taxon>
    </lineage>
</organism>